<sequence length="258" mass="28633">MMDWNNKNVVYVGGFSGFGYQVCQMMMKKPMKHLIVCSRMENVEMLKKLQAINTSVKVMFVQMNIADYASIVKGVKQVIGHVGHVDVLINGVGGLADKDVETTVAVNLTGLINTTLMFMPYMDKTQSGHGGMVVSISSVYGLEPGPAFSVYSAAKHGGIGFTRSMADEHLYHKTGVAFMCICPAMTSTELMMNKRDMNWMKWVPHSEEMWKMVMDAKMQTPEECAVNMMTAMEQAKNGAIYICSTSGMKEITPTVYMH</sequence>
<accession>P23170</accession>
<organism>
    <name type="scientific">Sarcophaga peregrina</name>
    <name type="common">Flesh fly</name>
    <name type="synonym">Boettcherisca peregrina</name>
    <dbReference type="NCBI Taxonomy" id="7386"/>
    <lineage>
        <taxon>Eukaryota</taxon>
        <taxon>Metazoa</taxon>
        <taxon>Ecdysozoa</taxon>
        <taxon>Arthropoda</taxon>
        <taxon>Hexapoda</taxon>
        <taxon>Insecta</taxon>
        <taxon>Pterygota</taxon>
        <taxon>Neoptera</taxon>
        <taxon>Endopterygota</taxon>
        <taxon>Diptera</taxon>
        <taxon>Brachycera</taxon>
        <taxon>Muscomorpha</taxon>
        <taxon>Oestroidea</taxon>
        <taxon>Sarcophagidae</taxon>
        <taxon>Sarcophaga</taxon>
        <taxon>Boettcherisca</taxon>
    </lineage>
</organism>
<name>25KD_SARPE</name>
<dbReference type="EMBL" id="X02570">
    <property type="protein sequence ID" value="CAA26412.1"/>
    <property type="molecule type" value="Genomic_DNA"/>
</dbReference>
<dbReference type="PIR" id="A24181">
    <property type="entry name" value="A24181"/>
</dbReference>
<dbReference type="PIR" id="T11741">
    <property type="entry name" value="T11741"/>
</dbReference>
<dbReference type="SMR" id="P23170"/>
<dbReference type="GO" id="GO:0005737">
    <property type="term" value="C:cytoplasm"/>
    <property type="evidence" value="ECO:0007669"/>
    <property type="project" value="TreeGrafter"/>
</dbReference>
<dbReference type="GO" id="GO:0004022">
    <property type="term" value="F:alcohol dehydrogenase (NAD+) activity"/>
    <property type="evidence" value="ECO:0007669"/>
    <property type="project" value="InterPro"/>
</dbReference>
<dbReference type="CDD" id="cd05323">
    <property type="entry name" value="ADH_SDR_c_like"/>
    <property type="match status" value="1"/>
</dbReference>
<dbReference type="FunFam" id="3.40.50.720:FF:000149">
    <property type="entry name" value="15-hydroxyprostaglandin dehydrogenase [NAD(+)]"/>
    <property type="match status" value="1"/>
</dbReference>
<dbReference type="Gene3D" id="3.40.50.720">
    <property type="entry name" value="NAD(P)-binding Rossmann-like Domain"/>
    <property type="match status" value="1"/>
</dbReference>
<dbReference type="InterPro" id="IPR002426">
    <property type="entry name" value="ADH_Ceratitis-type"/>
</dbReference>
<dbReference type="InterPro" id="IPR036291">
    <property type="entry name" value="NAD(P)-bd_dom_sf"/>
</dbReference>
<dbReference type="InterPro" id="IPR020904">
    <property type="entry name" value="Sc_DH/Rdtase_CS"/>
</dbReference>
<dbReference type="InterPro" id="IPR002347">
    <property type="entry name" value="SDR_fam"/>
</dbReference>
<dbReference type="PANTHER" id="PTHR44229">
    <property type="entry name" value="15-HYDROXYPROSTAGLANDIN DEHYDROGENASE [NAD(+)]"/>
    <property type="match status" value="1"/>
</dbReference>
<dbReference type="PANTHER" id="PTHR44229:SF8">
    <property type="entry name" value="ALCOHOL DEHYDROGENASE-RELATED"/>
    <property type="match status" value="1"/>
</dbReference>
<dbReference type="Pfam" id="PF00106">
    <property type="entry name" value="adh_short"/>
    <property type="match status" value="1"/>
</dbReference>
<dbReference type="PRINTS" id="PR01169">
    <property type="entry name" value="CERATITISADH"/>
</dbReference>
<dbReference type="PRINTS" id="PR01167">
    <property type="entry name" value="INSADHFAMILY"/>
</dbReference>
<dbReference type="PRINTS" id="PR00080">
    <property type="entry name" value="SDRFAMILY"/>
</dbReference>
<dbReference type="SUPFAM" id="SSF51735">
    <property type="entry name" value="NAD(P)-binding Rossmann-fold domains"/>
    <property type="match status" value="1"/>
</dbReference>
<dbReference type="PROSITE" id="PS00061">
    <property type="entry name" value="ADH_SHORT"/>
    <property type="match status" value="1"/>
</dbReference>
<protein>
    <recommendedName>
        <fullName>Development-specific 25 kDa protein</fullName>
    </recommendedName>
</protein>
<comment type="developmental stage">
    <text>Expressed in the fat body of middle third-instar larvae.</text>
</comment>
<comment type="similarity">
    <text evidence="3">Belongs to the short-chain dehydrogenases/reductases (SDR) family.</text>
</comment>
<keyword id="KW-0560">Oxidoreductase</keyword>
<feature type="chain" id="PRO_0000054445" description="Development-specific 25 kDa protein">
    <location>
        <begin position="1"/>
        <end position="258"/>
    </location>
</feature>
<feature type="active site" description="Proton acceptor" evidence="2">
    <location>
        <position position="151"/>
    </location>
</feature>
<feature type="binding site" evidence="1">
    <location>
        <begin position="10"/>
        <end position="34"/>
    </location>
    <ligand>
        <name>NAD(+)</name>
        <dbReference type="ChEBI" id="CHEBI:57540"/>
    </ligand>
</feature>
<feature type="binding site" evidence="1">
    <location>
        <position position="138"/>
    </location>
    <ligand>
        <name>substrate</name>
    </ligand>
</feature>
<reference key="1">
    <citation type="journal article" date="1985" name="J. Biochem.">
        <title>Structural analysis of a developmentally regulated 25-kDa protein gene of Sarcophaga peregrina.</title>
        <authorList>
            <person name="Matsumoto N."/>
            <person name="Sekimizu K."/>
            <person name="Soma G."/>
            <person name="Ohmura Y."/>
            <person name="Andoh T."/>
            <person name="Nakanishi Y."/>
            <person name="Obinata M."/>
            <person name="Natori S."/>
        </authorList>
    </citation>
    <scope>NUCLEOTIDE SEQUENCE [GENOMIC DNA]</scope>
</reference>
<reference key="2">
    <citation type="journal article" date="1996" name="Eur. J. Biochem.">
        <title>Purification and cDNA cloning of the alcohol dehydrogenase of the flesh fly Sarcophaga peregrina. A structural relationship between alcohol dehydrogenase and a 25-kDa protein.</title>
        <authorList>
            <person name="Horio T."/>
            <person name="Kubo T."/>
            <person name="Natori S."/>
        </authorList>
    </citation>
    <scope>SEQUENCE REVISION</scope>
</reference>
<proteinExistence type="evidence at transcript level"/>
<evidence type="ECO:0000250" key="1"/>
<evidence type="ECO:0000255" key="2">
    <source>
        <dbReference type="PROSITE-ProRule" id="PRU10001"/>
    </source>
</evidence>
<evidence type="ECO:0000305" key="3"/>